<protein>
    <recommendedName>
        <fullName evidence="1">tRNA (guanine-N(1)-)-methyltransferase</fullName>
        <ecNumber evidence="1">2.1.1.228</ecNumber>
    </recommendedName>
    <alternativeName>
        <fullName evidence="1">M1G-methyltransferase</fullName>
    </alternativeName>
    <alternativeName>
        <fullName evidence="1">tRNA [GM37] methyltransferase</fullName>
    </alternativeName>
</protein>
<proteinExistence type="inferred from homology"/>
<reference key="1">
    <citation type="submission" date="2007-08" db="EMBL/GenBank/DDBJ databases">
        <authorList>
            <consortium name="The Vibrio harveyi Genome Sequencing Project"/>
            <person name="Bassler B."/>
            <person name="Clifton S.W."/>
            <person name="Fulton L."/>
            <person name="Delehaunty K."/>
            <person name="Fronick C."/>
            <person name="Harrison M."/>
            <person name="Markivic C."/>
            <person name="Fulton R."/>
            <person name="Tin-Wollam A.-M."/>
            <person name="Shah N."/>
            <person name="Pepin K."/>
            <person name="Nash W."/>
            <person name="Thiruvilangam P."/>
            <person name="Bhonagiri V."/>
            <person name="Waters C."/>
            <person name="Tu K.C."/>
            <person name="Irgon J."/>
            <person name="Wilson R.K."/>
        </authorList>
    </citation>
    <scope>NUCLEOTIDE SEQUENCE [LARGE SCALE GENOMIC DNA]</scope>
    <source>
        <strain>ATCC BAA-1116 / BB120</strain>
    </source>
</reference>
<comment type="function">
    <text evidence="1">Specifically methylates guanosine-37 in various tRNAs.</text>
</comment>
<comment type="catalytic activity">
    <reaction evidence="1">
        <text>guanosine(37) in tRNA + S-adenosyl-L-methionine = N(1)-methylguanosine(37) in tRNA + S-adenosyl-L-homocysteine + H(+)</text>
        <dbReference type="Rhea" id="RHEA:36899"/>
        <dbReference type="Rhea" id="RHEA-COMP:10145"/>
        <dbReference type="Rhea" id="RHEA-COMP:10147"/>
        <dbReference type="ChEBI" id="CHEBI:15378"/>
        <dbReference type="ChEBI" id="CHEBI:57856"/>
        <dbReference type="ChEBI" id="CHEBI:59789"/>
        <dbReference type="ChEBI" id="CHEBI:73542"/>
        <dbReference type="ChEBI" id="CHEBI:74269"/>
        <dbReference type="EC" id="2.1.1.228"/>
    </reaction>
</comment>
<comment type="subunit">
    <text evidence="1">Homodimer.</text>
</comment>
<comment type="subcellular location">
    <subcellularLocation>
        <location evidence="1">Cytoplasm</location>
    </subcellularLocation>
</comment>
<comment type="similarity">
    <text evidence="1">Belongs to the RNA methyltransferase TrmD family.</text>
</comment>
<feature type="chain" id="PRO_1000006540" description="tRNA (guanine-N(1)-)-methyltransferase">
    <location>
        <begin position="1"/>
        <end position="247"/>
    </location>
</feature>
<feature type="binding site" evidence="1">
    <location>
        <position position="113"/>
    </location>
    <ligand>
        <name>S-adenosyl-L-methionine</name>
        <dbReference type="ChEBI" id="CHEBI:59789"/>
    </ligand>
</feature>
<feature type="binding site" evidence="1">
    <location>
        <begin position="133"/>
        <end position="138"/>
    </location>
    <ligand>
        <name>S-adenosyl-L-methionine</name>
        <dbReference type="ChEBI" id="CHEBI:59789"/>
    </ligand>
</feature>
<name>TRMD_VIBC1</name>
<dbReference type="EC" id="2.1.1.228" evidence="1"/>
<dbReference type="EMBL" id="CP000789">
    <property type="protein sequence ID" value="ABU72423.1"/>
    <property type="molecule type" value="Genomic_DNA"/>
</dbReference>
<dbReference type="RefSeq" id="WP_005425529.1">
    <property type="nucleotide sequence ID" value="NC_022269.1"/>
</dbReference>
<dbReference type="SMR" id="A7MYV2"/>
<dbReference type="GeneID" id="57839730"/>
<dbReference type="KEGG" id="vha:VIBHAR_03478"/>
<dbReference type="PATRIC" id="fig|338187.25.peg.2722"/>
<dbReference type="Proteomes" id="UP000008152">
    <property type="component" value="Chromosome I"/>
</dbReference>
<dbReference type="GO" id="GO:0005829">
    <property type="term" value="C:cytosol"/>
    <property type="evidence" value="ECO:0007669"/>
    <property type="project" value="TreeGrafter"/>
</dbReference>
<dbReference type="GO" id="GO:0052906">
    <property type="term" value="F:tRNA (guanine(37)-N1)-methyltransferase activity"/>
    <property type="evidence" value="ECO:0007669"/>
    <property type="project" value="UniProtKB-UniRule"/>
</dbReference>
<dbReference type="GO" id="GO:0002939">
    <property type="term" value="P:tRNA N1-guanine methylation"/>
    <property type="evidence" value="ECO:0007669"/>
    <property type="project" value="TreeGrafter"/>
</dbReference>
<dbReference type="CDD" id="cd18080">
    <property type="entry name" value="TrmD-like"/>
    <property type="match status" value="1"/>
</dbReference>
<dbReference type="FunFam" id="1.10.1270.20:FF:000001">
    <property type="entry name" value="tRNA (guanine-N(1)-)-methyltransferase"/>
    <property type="match status" value="1"/>
</dbReference>
<dbReference type="FunFam" id="3.40.1280.10:FF:000001">
    <property type="entry name" value="tRNA (guanine-N(1)-)-methyltransferase"/>
    <property type="match status" value="1"/>
</dbReference>
<dbReference type="Gene3D" id="3.40.1280.10">
    <property type="match status" value="1"/>
</dbReference>
<dbReference type="Gene3D" id="1.10.1270.20">
    <property type="entry name" value="tRNA(m1g37)methyltransferase, domain 2"/>
    <property type="match status" value="1"/>
</dbReference>
<dbReference type="HAMAP" id="MF_00605">
    <property type="entry name" value="TrmD"/>
    <property type="match status" value="1"/>
</dbReference>
<dbReference type="InterPro" id="IPR029028">
    <property type="entry name" value="Alpha/beta_knot_MTases"/>
</dbReference>
<dbReference type="InterPro" id="IPR023148">
    <property type="entry name" value="tRNA_m1G_MeTrfase_C_sf"/>
</dbReference>
<dbReference type="InterPro" id="IPR002649">
    <property type="entry name" value="tRNA_m1G_MeTrfase_TrmD"/>
</dbReference>
<dbReference type="InterPro" id="IPR029026">
    <property type="entry name" value="tRNA_m1G_MTases_N"/>
</dbReference>
<dbReference type="InterPro" id="IPR016009">
    <property type="entry name" value="tRNA_MeTrfase_TRMD/TRM10"/>
</dbReference>
<dbReference type="NCBIfam" id="NF000648">
    <property type="entry name" value="PRK00026.1"/>
    <property type="match status" value="1"/>
</dbReference>
<dbReference type="NCBIfam" id="TIGR00088">
    <property type="entry name" value="trmD"/>
    <property type="match status" value="1"/>
</dbReference>
<dbReference type="PANTHER" id="PTHR46417">
    <property type="entry name" value="TRNA (GUANINE-N(1)-)-METHYLTRANSFERASE"/>
    <property type="match status" value="1"/>
</dbReference>
<dbReference type="PANTHER" id="PTHR46417:SF1">
    <property type="entry name" value="TRNA (GUANINE-N(1)-)-METHYLTRANSFERASE"/>
    <property type="match status" value="1"/>
</dbReference>
<dbReference type="Pfam" id="PF01746">
    <property type="entry name" value="tRNA_m1G_MT"/>
    <property type="match status" value="1"/>
</dbReference>
<dbReference type="PIRSF" id="PIRSF000386">
    <property type="entry name" value="tRNA_mtase"/>
    <property type="match status" value="1"/>
</dbReference>
<dbReference type="SUPFAM" id="SSF75217">
    <property type="entry name" value="alpha/beta knot"/>
    <property type="match status" value="1"/>
</dbReference>
<accession>A7MYV2</accession>
<gene>
    <name evidence="1" type="primary">trmD</name>
    <name type="ordered locus">VIBHAR_03478</name>
</gene>
<sequence>MWVGVISLFPEMFRSVTDFGVTGQAVKKGLLSIETWNPRDFTHDKHRTVDDRPYGGGPGMLMMVQPLRDAIHTAKAASPGKTKVIYLSPQGRKLDQKGVEELATNENLLLICGRYEGVDERIIQSEVDEEWSIGDFVMTGGEIPAMTLIDSVSRFVPGVLGDFASAEEDSFANGLLDCPHYTRPEVLDDKEVPAVLMSGNHKDIRQWRLKQSLGRTWLRRPELLENLALTDEQEQLLAEFISEHNAK</sequence>
<organism>
    <name type="scientific">Vibrio campbellii (strain ATCC BAA-1116)</name>
    <dbReference type="NCBI Taxonomy" id="2902295"/>
    <lineage>
        <taxon>Bacteria</taxon>
        <taxon>Pseudomonadati</taxon>
        <taxon>Pseudomonadota</taxon>
        <taxon>Gammaproteobacteria</taxon>
        <taxon>Vibrionales</taxon>
        <taxon>Vibrionaceae</taxon>
        <taxon>Vibrio</taxon>
    </lineage>
</organism>
<evidence type="ECO:0000255" key="1">
    <source>
        <dbReference type="HAMAP-Rule" id="MF_00605"/>
    </source>
</evidence>
<keyword id="KW-0963">Cytoplasm</keyword>
<keyword id="KW-0489">Methyltransferase</keyword>
<keyword id="KW-0949">S-adenosyl-L-methionine</keyword>
<keyword id="KW-0808">Transferase</keyword>
<keyword id="KW-0819">tRNA processing</keyword>